<evidence type="ECO:0000255" key="1">
    <source>
        <dbReference type="HAMAP-Rule" id="MF_01220"/>
    </source>
</evidence>
<name>PYRH_THEMA</name>
<accession>Q9X1U0</accession>
<keyword id="KW-0021">Allosteric enzyme</keyword>
<keyword id="KW-0067">ATP-binding</keyword>
<keyword id="KW-0963">Cytoplasm</keyword>
<keyword id="KW-0418">Kinase</keyword>
<keyword id="KW-0547">Nucleotide-binding</keyword>
<keyword id="KW-0665">Pyrimidine biosynthesis</keyword>
<keyword id="KW-1185">Reference proteome</keyword>
<keyword id="KW-0808">Transferase</keyword>
<protein>
    <recommendedName>
        <fullName evidence="1">Uridylate kinase</fullName>
        <shortName evidence="1">UK</shortName>
        <ecNumber evidence="1">2.7.4.22</ecNumber>
    </recommendedName>
    <alternativeName>
        <fullName evidence="1">Uridine monophosphate kinase</fullName>
        <shortName evidence="1">UMP kinase</shortName>
        <shortName evidence="1">UMPK</shortName>
    </alternativeName>
</protein>
<reference key="1">
    <citation type="journal article" date="1999" name="Nature">
        <title>Evidence for lateral gene transfer between Archaea and Bacteria from genome sequence of Thermotoga maritima.</title>
        <authorList>
            <person name="Nelson K.E."/>
            <person name="Clayton R.A."/>
            <person name="Gill S.R."/>
            <person name="Gwinn M.L."/>
            <person name="Dodson R.J."/>
            <person name="Haft D.H."/>
            <person name="Hickey E.K."/>
            <person name="Peterson J.D."/>
            <person name="Nelson W.C."/>
            <person name="Ketchum K.A."/>
            <person name="McDonald L.A."/>
            <person name="Utterback T.R."/>
            <person name="Malek J.A."/>
            <person name="Linher K.D."/>
            <person name="Garrett M.M."/>
            <person name="Stewart A.M."/>
            <person name="Cotton M.D."/>
            <person name="Pratt M.S."/>
            <person name="Phillips C.A."/>
            <person name="Richardson D.L."/>
            <person name="Heidelberg J.F."/>
            <person name="Sutton G.G."/>
            <person name="Fleischmann R.D."/>
            <person name="Eisen J.A."/>
            <person name="White O."/>
            <person name="Salzberg S.L."/>
            <person name="Smith H.O."/>
            <person name="Venter J.C."/>
            <person name="Fraser C.M."/>
        </authorList>
    </citation>
    <scope>NUCLEOTIDE SEQUENCE [LARGE SCALE GENOMIC DNA]</scope>
    <source>
        <strain>ATCC 43589 / DSM 3109 / JCM 10099 / NBRC 100826 / MSB8</strain>
    </source>
</reference>
<comment type="function">
    <text evidence="1">Catalyzes the reversible phosphorylation of UMP to UDP.</text>
</comment>
<comment type="catalytic activity">
    <reaction evidence="1">
        <text>UMP + ATP = UDP + ADP</text>
        <dbReference type="Rhea" id="RHEA:24400"/>
        <dbReference type="ChEBI" id="CHEBI:30616"/>
        <dbReference type="ChEBI" id="CHEBI:57865"/>
        <dbReference type="ChEBI" id="CHEBI:58223"/>
        <dbReference type="ChEBI" id="CHEBI:456216"/>
        <dbReference type="EC" id="2.7.4.22"/>
    </reaction>
</comment>
<comment type="activity regulation">
    <text evidence="1">Allosterically activated by GTP. Inhibited by UTP.</text>
</comment>
<comment type="pathway">
    <text evidence="1">Pyrimidine metabolism; CTP biosynthesis via de novo pathway; UDP from UMP (UMPK route): step 1/1.</text>
</comment>
<comment type="subunit">
    <text evidence="1">Homohexamer.</text>
</comment>
<comment type="subcellular location">
    <subcellularLocation>
        <location evidence="1">Cytoplasm</location>
    </subcellularLocation>
</comment>
<comment type="similarity">
    <text evidence="1">Belongs to the UMP kinase family.</text>
</comment>
<dbReference type="EC" id="2.7.4.22" evidence="1"/>
<dbReference type="EMBL" id="AE000512">
    <property type="protein sequence ID" value="AAD36671.1"/>
    <property type="molecule type" value="Genomic_DNA"/>
</dbReference>
<dbReference type="PIR" id="H72234">
    <property type="entry name" value="H72234"/>
</dbReference>
<dbReference type="RefSeq" id="NP_229404.1">
    <property type="nucleotide sequence ID" value="NC_000853.1"/>
</dbReference>
<dbReference type="RefSeq" id="WP_004082051.1">
    <property type="nucleotide sequence ID" value="NZ_CP011107.1"/>
</dbReference>
<dbReference type="SMR" id="Q9X1U0"/>
<dbReference type="FunCoup" id="Q9X1U0">
    <property type="interactions" value="476"/>
</dbReference>
<dbReference type="STRING" id="243274.TM_1604"/>
<dbReference type="PaxDb" id="243274-THEMA_06230"/>
<dbReference type="EnsemblBacteria" id="AAD36671">
    <property type="protein sequence ID" value="AAD36671"/>
    <property type="gene ID" value="TM_1604"/>
</dbReference>
<dbReference type="KEGG" id="tma:TM1604"/>
<dbReference type="KEGG" id="tmi:THEMA_06230"/>
<dbReference type="KEGG" id="tmm:Tmari_1612"/>
<dbReference type="KEGG" id="tmw:THMA_1644"/>
<dbReference type="eggNOG" id="COG0528">
    <property type="taxonomic scope" value="Bacteria"/>
</dbReference>
<dbReference type="InParanoid" id="Q9X1U0"/>
<dbReference type="OrthoDB" id="9807458at2"/>
<dbReference type="UniPathway" id="UPA00159">
    <property type="reaction ID" value="UER00275"/>
</dbReference>
<dbReference type="Proteomes" id="UP000008183">
    <property type="component" value="Chromosome"/>
</dbReference>
<dbReference type="GO" id="GO:0005737">
    <property type="term" value="C:cytoplasm"/>
    <property type="evidence" value="ECO:0007669"/>
    <property type="project" value="UniProtKB-SubCell"/>
</dbReference>
<dbReference type="GO" id="GO:0005524">
    <property type="term" value="F:ATP binding"/>
    <property type="evidence" value="ECO:0007669"/>
    <property type="project" value="UniProtKB-KW"/>
</dbReference>
<dbReference type="GO" id="GO:0033862">
    <property type="term" value="F:UMP kinase activity"/>
    <property type="evidence" value="ECO:0000318"/>
    <property type="project" value="GO_Central"/>
</dbReference>
<dbReference type="GO" id="GO:0044210">
    <property type="term" value="P:'de novo' CTP biosynthetic process"/>
    <property type="evidence" value="ECO:0007669"/>
    <property type="project" value="UniProtKB-UniRule"/>
</dbReference>
<dbReference type="GO" id="GO:0006225">
    <property type="term" value="P:UDP biosynthetic process"/>
    <property type="evidence" value="ECO:0000318"/>
    <property type="project" value="GO_Central"/>
</dbReference>
<dbReference type="CDD" id="cd04254">
    <property type="entry name" value="AAK_UMPK-PyrH-Ec"/>
    <property type="match status" value="1"/>
</dbReference>
<dbReference type="FunFam" id="3.40.1160.10:FF:000001">
    <property type="entry name" value="Uridylate kinase"/>
    <property type="match status" value="1"/>
</dbReference>
<dbReference type="Gene3D" id="3.40.1160.10">
    <property type="entry name" value="Acetylglutamate kinase-like"/>
    <property type="match status" value="1"/>
</dbReference>
<dbReference type="HAMAP" id="MF_01220_B">
    <property type="entry name" value="PyrH_B"/>
    <property type="match status" value="1"/>
</dbReference>
<dbReference type="InterPro" id="IPR036393">
    <property type="entry name" value="AceGlu_kinase-like_sf"/>
</dbReference>
<dbReference type="InterPro" id="IPR001048">
    <property type="entry name" value="Asp/Glu/Uridylate_kinase"/>
</dbReference>
<dbReference type="InterPro" id="IPR011817">
    <property type="entry name" value="Uridylate_kinase"/>
</dbReference>
<dbReference type="InterPro" id="IPR015963">
    <property type="entry name" value="Uridylate_kinase_bac"/>
</dbReference>
<dbReference type="NCBIfam" id="TIGR02075">
    <property type="entry name" value="pyrH_bact"/>
    <property type="match status" value="1"/>
</dbReference>
<dbReference type="PANTHER" id="PTHR42833">
    <property type="entry name" value="URIDYLATE KINASE"/>
    <property type="match status" value="1"/>
</dbReference>
<dbReference type="PANTHER" id="PTHR42833:SF4">
    <property type="entry name" value="URIDYLATE KINASE PUMPKIN, CHLOROPLASTIC"/>
    <property type="match status" value="1"/>
</dbReference>
<dbReference type="Pfam" id="PF00696">
    <property type="entry name" value="AA_kinase"/>
    <property type="match status" value="1"/>
</dbReference>
<dbReference type="PIRSF" id="PIRSF005650">
    <property type="entry name" value="Uridylate_kin"/>
    <property type="match status" value="1"/>
</dbReference>
<dbReference type="SUPFAM" id="SSF53633">
    <property type="entry name" value="Carbamate kinase-like"/>
    <property type="match status" value="1"/>
</dbReference>
<organism>
    <name type="scientific">Thermotoga maritima (strain ATCC 43589 / DSM 3109 / JCM 10099 / NBRC 100826 / MSB8)</name>
    <dbReference type="NCBI Taxonomy" id="243274"/>
    <lineage>
        <taxon>Bacteria</taxon>
        <taxon>Thermotogati</taxon>
        <taxon>Thermotogota</taxon>
        <taxon>Thermotogae</taxon>
        <taxon>Thermotogales</taxon>
        <taxon>Thermotogaceae</taxon>
        <taxon>Thermotoga</taxon>
    </lineage>
</organism>
<sequence length="231" mass="25235">MRVLVKLSGEALSGEGGRGFDPERVNYIVNEIKSAIEEGFKIGIVVGAGNLFRGVELKNLTMTRADQIGLLGTVMNSVYLKDIFERSGLKARIYSQIVNLPDVERVNYDSIESALRENSILIFAGGTSNPFFTTDTAAVLRAQEMRAKLVVKATKVDGVYDKDPKKFPDAKKIPHLTFSEAMKMGLKVMDAEAFALCKKLGITVKVINFFEPGTLLKALKGEDVGSTVVPD</sequence>
<feature type="chain" id="PRO_0000143899" description="Uridylate kinase">
    <location>
        <begin position="1"/>
        <end position="231"/>
    </location>
</feature>
<feature type="region of interest" description="Involved in allosteric activation by GTP" evidence="1">
    <location>
        <begin position="14"/>
        <end position="19"/>
    </location>
</feature>
<feature type="binding site" evidence="1">
    <location>
        <begin position="6"/>
        <end position="9"/>
    </location>
    <ligand>
        <name>ATP</name>
        <dbReference type="ChEBI" id="CHEBI:30616"/>
    </ligand>
</feature>
<feature type="binding site" evidence="1">
    <location>
        <position position="49"/>
    </location>
    <ligand>
        <name>ATP</name>
        <dbReference type="ChEBI" id="CHEBI:30616"/>
    </ligand>
</feature>
<feature type="binding site" evidence="1">
    <location>
        <position position="53"/>
    </location>
    <ligand>
        <name>ATP</name>
        <dbReference type="ChEBI" id="CHEBI:30616"/>
    </ligand>
</feature>
<feature type="binding site" evidence="1">
    <location>
        <position position="66"/>
    </location>
    <ligand>
        <name>UMP</name>
        <dbReference type="ChEBI" id="CHEBI:57865"/>
    </ligand>
</feature>
<feature type="binding site" evidence="1">
    <location>
        <begin position="127"/>
        <end position="134"/>
    </location>
    <ligand>
        <name>UMP</name>
        <dbReference type="ChEBI" id="CHEBI:57865"/>
    </ligand>
</feature>
<feature type="binding site" evidence="1">
    <location>
        <position position="154"/>
    </location>
    <ligand>
        <name>ATP</name>
        <dbReference type="ChEBI" id="CHEBI:30616"/>
    </ligand>
</feature>
<feature type="binding site" evidence="1">
    <location>
        <position position="160"/>
    </location>
    <ligand>
        <name>ATP</name>
        <dbReference type="ChEBI" id="CHEBI:30616"/>
    </ligand>
</feature>
<feature type="binding site" evidence="1">
    <location>
        <position position="163"/>
    </location>
    <ligand>
        <name>ATP</name>
        <dbReference type="ChEBI" id="CHEBI:30616"/>
    </ligand>
</feature>
<gene>
    <name evidence="1" type="primary">pyrH</name>
    <name type="ordered locus">TM_1604</name>
</gene>
<proteinExistence type="inferred from homology"/>